<reference key="1">
    <citation type="journal article" date="2009" name="J. Bacteriol.">
        <title>Complete genome sequence of Erythrobacter litoralis HTCC2594.</title>
        <authorList>
            <person name="Oh H.M."/>
            <person name="Giovannoni S.J."/>
            <person name="Ferriera S."/>
            <person name="Johnson J."/>
            <person name="Cho J.C."/>
        </authorList>
    </citation>
    <scope>NUCLEOTIDE SEQUENCE [LARGE SCALE GENOMIC DNA]</scope>
    <source>
        <strain>HTCC2594</strain>
    </source>
</reference>
<comment type="function">
    <text evidence="1">Together with its co-chaperonin GroES, plays an essential role in assisting protein folding. The GroEL-GroES system forms a nano-cage that allows encapsulation of the non-native substrate proteins and provides a physical environment optimized to promote and accelerate protein folding.</text>
</comment>
<comment type="catalytic activity">
    <reaction evidence="1">
        <text>ATP + H2O + a folded polypeptide = ADP + phosphate + an unfolded polypeptide.</text>
        <dbReference type="EC" id="5.6.1.7"/>
    </reaction>
</comment>
<comment type="subunit">
    <text evidence="1">Forms a cylinder of 14 subunits composed of two heptameric rings stacked back-to-back. Interacts with the co-chaperonin GroES.</text>
</comment>
<comment type="subcellular location">
    <subcellularLocation>
        <location evidence="1">Cytoplasm</location>
    </subcellularLocation>
</comment>
<comment type="similarity">
    <text evidence="1">Belongs to the chaperonin (HSP60) family.</text>
</comment>
<organism>
    <name type="scientific">Erythrobacter litoralis (strain HTCC2594)</name>
    <dbReference type="NCBI Taxonomy" id="314225"/>
    <lineage>
        <taxon>Bacteria</taxon>
        <taxon>Pseudomonadati</taxon>
        <taxon>Pseudomonadota</taxon>
        <taxon>Alphaproteobacteria</taxon>
        <taxon>Sphingomonadales</taxon>
        <taxon>Erythrobacteraceae</taxon>
        <taxon>Erythrobacter/Porphyrobacter group</taxon>
        <taxon>Erythrobacter</taxon>
    </lineage>
</organism>
<sequence>MAAKDVKFGRDAREGILKGVDTLANAVKVTLGPKGRNVVIEKSFGAPRITKDGVTVAKEIELKDKYENMGAQMLREVASKTNDLAGDGTTTATVLGQAIVREGMKSVAAGMNPMDLKRGIDIAVTKVVENLKSRSKDVAGSEEIAQVGIISANGDREVGEKIAEAMEKVGKEGVITVDESKGLEFELETVEGMQFDRGYLSPYFITNPDKMTVELENPYILIHEKKLSNLQAMLPILEAAVQSGRPLLIIAEDIEGEALATLVVNKLRGGLKVAAVKAPGFGDRRKAMLQDIAILTKGEMISEDLGIKLENVTLGMLGEAKRVTIDKDNTTIVDGAGDEADIKARVNEIRTQIDNTTSDYDREKLQERLAKLAGGVAVIKVGGASEVEVKERKDRVDDALHATRAAVEEGIVPGGGTALLYATKVLEGLKGENDDQTRGIDIVRKAIVAPVRQIATNAGHDGAVISGNLLREDNESQGFNAATDTYEDLVKAGVIDPTKVVRVALQDAASVAGLLITTEAAISEVPEDKSSGGGMPDMGGMGGMGGMGGF</sequence>
<gene>
    <name evidence="1" type="primary">groEL2</name>
    <name evidence="1" type="synonym">groL2</name>
    <name type="ordered locus">ELI_14400</name>
</gene>
<protein>
    <recommendedName>
        <fullName evidence="1">Chaperonin GroEL 2</fullName>
        <ecNumber evidence="1">5.6.1.7</ecNumber>
    </recommendedName>
    <alternativeName>
        <fullName evidence="1">60 kDa chaperonin 2</fullName>
    </alternativeName>
    <alternativeName>
        <fullName evidence="1">Chaperonin-60 2</fullName>
        <shortName evidence="1">Cpn60 2</shortName>
    </alternativeName>
</protein>
<proteinExistence type="inferred from homology"/>
<name>CH602_ERYLH</name>
<evidence type="ECO:0000255" key="1">
    <source>
        <dbReference type="HAMAP-Rule" id="MF_00600"/>
    </source>
</evidence>
<accession>Q2N5R9</accession>
<feature type="chain" id="PRO_0000331998" description="Chaperonin GroEL 2">
    <location>
        <begin position="1"/>
        <end position="550"/>
    </location>
</feature>
<feature type="binding site" evidence="1">
    <location>
        <begin position="30"/>
        <end position="33"/>
    </location>
    <ligand>
        <name>ATP</name>
        <dbReference type="ChEBI" id="CHEBI:30616"/>
    </ligand>
</feature>
<feature type="binding site" evidence="1">
    <location>
        <position position="51"/>
    </location>
    <ligand>
        <name>ATP</name>
        <dbReference type="ChEBI" id="CHEBI:30616"/>
    </ligand>
</feature>
<feature type="binding site" evidence="1">
    <location>
        <begin position="87"/>
        <end position="91"/>
    </location>
    <ligand>
        <name>ATP</name>
        <dbReference type="ChEBI" id="CHEBI:30616"/>
    </ligand>
</feature>
<feature type="binding site" evidence="1">
    <location>
        <position position="415"/>
    </location>
    <ligand>
        <name>ATP</name>
        <dbReference type="ChEBI" id="CHEBI:30616"/>
    </ligand>
</feature>
<feature type="binding site" evidence="1">
    <location>
        <begin position="480"/>
        <end position="482"/>
    </location>
    <ligand>
        <name>ATP</name>
        <dbReference type="ChEBI" id="CHEBI:30616"/>
    </ligand>
</feature>
<feature type="binding site" evidence="1">
    <location>
        <position position="496"/>
    </location>
    <ligand>
        <name>ATP</name>
        <dbReference type="ChEBI" id="CHEBI:30616"/>
    </ligand>
</feature>
<dbReference type="EC" id="5.6.1.7" evidence="1"/>
<dbReference type="EMBL" id="CP000157">
    <property type="protein sequence ID" value="ABC64972.1"/>
    <property type="molecule type" value="Genomic_DNA"/>
</dbReference>
<dbReference type="RefSeq" id="WP_011415794.1">
    <property type="nucleotide sequence ID" value="NC_007722.1"/>
</dbReference>
<dbReference type="SMR" id="Q2N5R9"/>
<dbReference type="STRING" id="314225.ELI_14400"/>
<dbReference type="KEGG" id="eli:ELI_14400"/>
<dbReference type="eggNOG" id="COG0459">
    <property type="taxonomic scope" value="Bacteria"/>
</dbReference>
<dbReference type="HOGENOM" id="CLU_016503_3_0_5"/>
<dbReference type="OrthoDB" id="9766614at2"/>
<dbReference type="Proteomes" id="UP000008808">
    <property type="component" value="Chromosome"/>
</dbReference>
<dbReference type="GO" id="GO:0005737">
    <property type="term" value="C:cytoplasm"/>
    <property type="evidence" value="ECO:0007669"/>
    <property type="project" value="UniProtKB-SubCell"/>
</dbReference>
<dbReference type="GO" id="GO:0005524">
    <property type="term" value="F:ATP binding"/>
    <property type="evidence" value="ECO:0007669"/>
    <property type="project" value="UniProtKB-UniRule"/>
</dbReference>
<dbReference type="GO" id="GO:0140662">
    <property type="term" value="F:ATP-dependent protein folding chaperone"/>
    <property type="evidence" value="ECO:0007669"/>
    <property type="project" value="InterPro"/>
</dbReference>
<dbReference type="GO" id="GO:0016853">
    <property type="term" value="F:isomerase activity"/>
    <property type="evidence" value="ECO:0007669"/>
    <property type="project" value="UniProtKB-KW"/>
</dbReference>
<dbReference type="GO" id="GO:0051082">
    <property type="term" value="F:unfolded protein binding"/>
    <property type="evidence" value="ECO:0007669"/>
    <property type="project" value="UniProtKB-UniRule"/>
</dbReference>
<dbReference type="GO" id="GO:0042026">
    <property type="term" value="P:protein refolding"/>
    <property type="evidence" value="ECO:0007669"/>
    <property type="project" value="UniProtKB-UniRule"/>
</dbReference>
<dbReference type="CDD" id="cd03344">
    <property type="entry name" value="GroEL"/>
    <property type="match status" value="1"/>
</dbReference>
<dbReference type="FunFam" id="1.10.560.10:FF:000001">
    <property type="entry name" value="60 kDa chaperonin"/>
    <property type="match status" value="1"/>
</dbReference>
<dbReference type="FunFam" id="3.50.7.10:FF:000001">
    <property type="entry name" value="60 kDa chaperonin"/>
    <property type="match status" value="1"/>
</dbReference>
<dbReference type="Gene3D" id="3.50.7.10">
    <property type="entry name" value="GroEL"/>
    <property type="match status" value="1"/>
</dbReference>
<dbReference type="Gene3D" id="1.10.560.10">
    <property type="entry name" value="GroEL-like equatorial domain"/>
    <property type="match status" value="1"/>
</dbReference>
<dbReference type="Gene3D" id="3.30.260.10">
    <property type="entry name" value="TCP-1-like chaperonin intermediate domain"/>
    <property type="match status" value="1"/>
</dbReference>
<dbReference type="HAMAP" id="MF_00600">
    <property type="entry name" value="CH60"/>
    <property type="match status" value="1"/>
</dbReference>
<dbReference type="InterPro" id="IPR018370">
    <property type="entry name" value="Chaperonin_Cpn60_CS"/>
</dbReference>
<dbReference type="InterPro" id="IPR001844">
    <property type="entry name" value="Cpn60/GroEL"/>
</dbReference>
<dbReference type="InterPro" id="IPR002423">
    <property type="entry name" value="Cpn60/GroEL/TCP-1"/>
</dbReference>
<dbReference type="InterPro" id="IPR027409">
    <property type="entry name" value="GroEL-like_apical_dom_sf"/>
</dbReference>
<dbReference type="InterPro" id="IPR027413">
    <property type="entry name" value="GROEL-like_equatorial_sf"/>
</dbReference>
<dbReference type="InterPro" id="IPR027410">
    <property type="entry name" value="TCP-1-like_intermed_sf"/>
</dbReference>
<dbReference type="NCBIfam" id="TIGR02348">
    <property type="entry name" value="GroEL"/>
    <property type="match status" value="1"/>
</dbReference>
<dbReference type="NCBIfam" id="NF000592">
    <property type="entry name" value="PRK00013.1"/>
    <property type="match status" value="1"/>
</dbReference>
<dbReference type="NCBIfam" id="NF009487">
    <property type="entry name" value="PRK12849.1"/>
    <property type="match status" value="1"/>
</dbReference>
<dbReference type="NCBIfam" id="NF009488">
    <property type="entry name" value="PRK12850.1"/>
    <property type="match status" value="1"/>
</dbReference>
<dbReference type="NCBIfam" id="NF009489">
    <property type="entry name" value="PRK12851.1"/>
    <property type="match status" value="1"/>
</dbReference>
<dbReference type="PANTHER" id="PTHR45633">
    <property type="entry name" value="60 KDA HEAT SHOCK PROTEIN, MITOCHONDRIAL"/>
    <property type="match status" value="1"/>
</dbReference>
<dbReference type="Pfam" id="PF00118">
    <property type="entry name" value="Cpn60_TCP1"/>
    <property type="match status" value="1"/>
</dbReference>
<dbReference type="PRINTS" id="PR00298">
    <property type="entry name" value="CHAPERONIN60"/>
</dbReference>
<dbReference type="SUPFAM" id="SSF52029">
    <property type="entry name" value="GroEL apical domain-like"/>
    <property type="match status" value="1"/>
</dbReference>
<dbReference type="SUPFAM" id="SSF48592">
    <property type="entry name" value="GroEL equatorial domain-like"/>
    <property type="match status" value="1"/>
</dbReference>
<dbReference type="SUPFAM" id="SSF54849">
    <property type="entry name" value="GroEL-intermediate domain like"/>
    <property type="match status" value="1"/>
</dbReference>
<dbReference type="PROSITE" id="PS00296">
    <property type="entry name" value="CHAPERONINS_CPN60"/>
    <property type="match status" value="1"/>
</dbReference>
<keyword id="KW-0067">ATP-binding</keyword>
<keyword id="KW-0143">Chaperone</keyword>
<keyword id="KW-0963">Cytoplasm</keyword>
<keyword id="KW-0413">Isomerase</keyword>
<keyword id="KW-0547">Nucleotide-binding</keyword>
<keyword id="KW-1185">Reference proteome</keyword>